<sequence>MEAERRHRALYKGTTPPWKETYRKRCVERLKSNRSKLLDKFRQVGERIHGGVGGSFLVQEVMEEEWKVMQFENGGFPSMWKKDAFSQDPDELATLEEIKQELLLEEKAMVEEFENILQFEEQCFDSVVELSTGDQIVCPVCNRNYLTVTSCFIVCQCGVYINTQSQGMSIEKLHSLLESNLTAHAYHCNKLPVFSVATELGGAASLFMSCQECDAMVVIL</sequence>
<comment type="function">
    <text evidence="1">Mediates the import of RPA complex into the nucleus, via its interaction with importin beta.</text>
</comment>
<comment type="subunit">
    <text evidence="1">Interacts directly with the RPA1 subunit of RPA complex. Interacts with importin beta, but not with importin alpha. Forms a complex with the RPA complex and importin beta, which is dissociated by Ran-GTP (By similarity).</text>
</comment>
<comment type="subcellular location">
    <subcellularLocation>
        <location evidence="1">Nucleus</location>
    </subcellularLocation>
</comment>
<comment type="sequence caution" evidence="2">
    <conflict type="erroneous initiation">
        <sequence resource="EMBL-CDS" id="AAH88792"/>
    </conflict>
</comment>
<feature type="chain" id="PRO_0000076303" description="RPA-interacting protein B">
    <location>
        <begin position="1"/>
        <end position="220"/>
    </location>
</feature>
<feature type="zinc finger region" description="RIP-type">
    <location>
        <begin position="138"/>
        <end position="213"/>
    </location>
</feature>
<feature type="region of interest" description="Interaction with importin beta" evidence="1">
    <location>
        <begin position="1"/>
        <end position="45"/>
    </location>
</feature>
<feature type="region of interest" description="Interaction with RPA1" evidence="1">
    <location>
        <begin position="49"/>
        <end position="165"/>
    </location>
</feature>
<name>RIPB_XENLA</name>
<organism>
    <name type="scientific">Xenopus laevis</name>
    <name type="common">African clawed frog</name>
    <dbReference type="NCBI Taxonomy" id="8355"/>
    <lineage>
        <taxon>Eukaryota</taxon>
        <taxon>Metazoa</taxon>
        <taxon>Chordata</taxon>
        <taxon>Craniata</taxon>
        <taxon>Vertebrata</taxon>
        <taxon>Euteleostomi</taxon>
        <taxon>Amphibia</taxon>
        <taxon>Batrachia</taxon>
        <taxon>Anura</taxon>
        <taxon>Pipoidea</taxon>
        <taxon>Pipidae</taxon>
        <taxon>Xenopodinae</taxon>
        <taxon>Xenopus</taxon>
        <taxon>Xenopus</taxon>
    </lineage>
</organism>
<gene>
    <name type="primary">rpain-b</name>
    <name type="synonym">rip-b</name>
</gene>
<evidence type="ECO:0000250" key="1"/>
<evidence type="ECO:0000305" key="2"/>
<keyword id="KW-0479">Metal-binding</keyword>
<keyword id="KW-0539">Nucleus</keyword>
<keyword id="KW-1185">Reference proteome</keyword>
<keyword id="KW-0862">Zinc</keyword>
<keyword id="KW-0863">Zinc-finger</keyword>
<dbReference type="EMBL" id="BC088792">
    <property type="protein sequence ID" value="AAH88792.1"/>
    <property type="status" value="ALT_INIT"/>
    <property type="molecule type" value="mRNA"/>
</dbReference>
<dbReference type="RefSeq" id="NP_001088906.2">
    <property type="nucleotide sequence ID" value="NM_001095437.2"/>
</dbReference>
<dbReference type="GeneID" id="496256"/>
<dbReference type="KEGG" id="xla:496256"/>
<dbReference type="AGR" id="Xenbase:XB-GENE-6252220"/>
<dbReference type="CTD" id="496256"/>
<dbReference type="Xenbase" id="XB-GENE-6252220">
    <property type="gene designation" value="rpain.L"/>
</dbReference>
<dbReference type="OMA" id="AFRKGCL"/>
<dbReference type="OrthoDB" id="435311at2759"/>
<dbReference type="Proteomes" id="UP000186698">
    <property type="component" value="Chromosome 2L"/>
</dbReference>
<dbReference type="Bgee" id="496256">
    <property type="expression patterns" value="Expressed in oocyte and 19 other cell types or tissues"/>
</dbReference>
<dbReference type="GO" id="GO:0005634">
    <property type="term" value="C:nucleus"/>
    <property type="evidence" value="ECO:0000318"/>
    <property type="project" value="GO_Central"/>
</dbReference>
<dbReference type="GO" id="GO:0016605">
    <property type="term" value="C:PML body"/>
    <property type="evidence" value="ECO:0007669"/>
    <property type="project" value="TreeGrafter"/>
</dbReference>
<dbReference type="GO" id="GO:0008270">
    <property type="term" value="F:zinc ion binding"/>
    <property type="evidence" value="ECO:0007669"/>
    <property type="project" value="UniProtKB-KW"/>
</dbReference>
<dbReference type="GO" id="GO:0006606">
    <property type="term" value="P:protein import into nucleus"/>
    <property type="evidence" value="ECO:0000318"/>
    <property type="project" value="GO_Central"/>
</dbReference>
<dbReference type="InterPro" id="IPR028156">
    <property type="entry name" value="RIP"/>
</dbReference>
<dbReference type="InterPro" id="IPR028159">
    <property type="entry name" value="RPA_interact_C_dom"/>
</dbReference>
<dbReference type="InterPro" id="IPR028158">
    <property type="entry name" value="RPA_interact_N_dom"/>
</dbReference>
<dbReference type="PANTHER" id="PTHR31742:SF1">
    <property type="entry name" value="RPA-INTERACTING PROTEIN"/>
    <property type="match status" value="1"/>
</dbReference>
<dbReference type="PANTHER" id="PTHR31742">
    <property type="entry name" value="RPA-INTERACTING PROTEIN RPAIN"/>
    <property type="match status" value="1"/>
</dbReference>
<dbReference type="Pfam" id="PF14768">
    <property type="entry name" value="RPA_interact_C"/>
    <property type="match status" value="1"/>
</dbReference>
<dbReference type="Pfam" id="PF14766">
    <property type="entry name" value="RPA_interact_N"/>
    <property type="match status" value="1"/>
</dbReference>
<reference key="1">
    <citation type="submission" date="2004-12" db="EMBL/GenBank/DDBJ databases">
        <authorList>
            <consortium name="NIH - Xenopus Gene Collection (XGC) project"/>
        </authorList>
    </citation>
    <scope>NUCLEOTIDE SEQUENCE [LARGE SCALE MRNA]</scope>
    <source>
        <tissue>Egg</tissue>
    </source>
</reference>
<accession>Q5M782</accession>
<proteinExistence type="evidence at transcript level"/>
<protein>
    <recommendedName>
        <fullName>RPA-interacting protein B</fullName>
    </recommendedName>
</protein>